<organism>
    <name type="scientific">Bacillus subtilis (strain 168)</name>
    <dbReference type="NCBI Taxonomy" id="224308"/>
    <lineage>
        <taxon>Bacteria</taxon>
        <taxon>Bacillati</taxon>
        <taxon>Bacillota</taxon>
        <taxon>Bacilli</taxon>
        <taxon>Bacillales</taxon>
        <taxon>Bacillaceae</taxon>
        <taxon>Bacillus</taxon>
    </lineage>
</organism>
<gene>
    <name type="primary">bmrR</name>
    <name type="synonym">bmr1R</name>
    <name type="ordered locus">BSU24020</name>
</gene>
<keyword id="KW-0002">3D-structure</keyword>
<keyword id="KW-0010">Activator</keyword>
<keyword id="KW-0238">DNA-binding</keyword>
<keyword id="KW-1185">Reference proteome</keyword>
<keyword id="KW-0804">Transcription</keyword>
<keyword id="KW-0805">Transcription regulation</keyword>
<feature type="chain" id="PRO_0000098109" description="Multidrug-efflux transporter 1 regulator">
    <location>
        <begin position="1"/>
        <end position="278"/>
    </location>
</feature>
<feature type="domain" description="HTH merR-type" evidence="1">
    <location>
        <begin position="5"/>
        <end position="75"/>
    </location>
</feature>
<feature type="DNA-binding region" description="H-T-H motif" evidence="1">
    <location>
        <begin position="8"/>
        <end position="27"/>
    </location>
</feature>
<feature type="strand" evidence="4">
    <location>
        <begin position="5"/>
        <end position="7"/>
    </location>
</feature>
<feature type="helix" evidence="4">
    <location>
        <begin position="8"/>
        <end position="15"/>
    </location>
</feature>
<feature type="helix" evidence="4">
    <location>
        <begin position="19"/>
        <end position="27"/>
    </location>
</feature>
<feature type="strand" evidence="4">
    <location>
        <begin position="34"/>
        <end position="36"/>
    </location>
</feature>
<feature type="turn" evidence="4">
    <location>
        <begin position="38"/>
        <end position="40"/>
    </location>
</feature>
<feature type="strand" evidence="4">
    <location>
        <begin position="43"/>
        <end position="46"/>
    </location>
</feature>
<feature type="helix" evidence="4">
    <location>
        <begin position="48"/>
        <end position="51"/>
    </location>
</feature>
<feature type="helix" evidence="4">
    <location>
        <begin position="52"/>
        <end position="61"/>
    </location>
</feature>
<feature type="helix" evidence="4">
    <location>
        <begin position="66"/>
        <end position="72"/>
    </location>
</feature>
<feature type="helix" evidence="4">
    <location>
        <begin position="77"/>
        <end position="116"/>
    </location>
</feature>
<feature type="strand" evidence="3">
    <location>
        <begin position="119"/>
        <end position="121"/>
    </location>
</feature>
<feature type="strand" evidence="4">
    <location>
        <begin position="125"/>
        <end position="129"/>
    </location>
</feature>
<feature type="strand" evidence="4">
    <location>
        <begin position="132"/>
        <end position="138"/>
    </location>
</feature>
<feature type="turn" evidence="4">
    <location>
        <begin position="144"/>
        <end position="146"/>
    </location>
</feature>
<feature type="helix" evidence="4">
    <location>
        <begin position="149"/>
        <end position="152"/>
    </location>
</feature>
<feature type="helix" evidence="4">
    <location>
        <begin position="153"/>
        <end position="163"/>
    </location>
</feature>
<feature type="strand" evidence="4">
    <location>
        <begin position="170"/>
        <end position="174"/>
    </location>
</feature>
<feature type="helix" evidence="4">
    <location>
        <begin position="182"/>
        <end position="184"/>
    </location>
</feature>
<feature type="strand" evidence="4">
    <location>
        <begin position="188"/>
        <end position="193"/>
    </location>
</feature>
<feature type="strand" evidence="4">
    <location>
        <begin position="207"/>
        <end position="212"/>
    </location>
</feature>
<feature type="strand" evidence="4">
    <location>
        <begin position="214"/>
        <end position="223"/>
    </location>
</feature>
<feature type="helix" evidence="4">
    <location>
        <begin position="226"/>
        <end position="242"/>
    </location>
</feature>
<feature type="strand" evidence="4">
    <location>
        <begin position="247"/>
        <end position="258"/>
    </location>
</feature>
<feature type="strand" evidence="4">
    <location>
        <begin position="262"/>
        <end position="264"/>
    </location>
</feature>
<feature type="strand" evidence="4">
    <location>
        <begin position="268"/>
        <end position="276"/>
    </location>
</feature>
<proteinExistence type="evidence at protein level"/>
<evidence type="ECO:0000255" key="1">
    <source>
        <dbReference type="PROSITE-ProRule" id="PRU00254"/>
    </source>
</evidence>
<evidence type="ECO:0000305" key="2"/>
<evidence type="ECO:0007829" key="3">
    <source>
        <dbReference type="PDB" id="1EXJ"/>
    </source>
</evidence>
<evidence type="ECO:0007829" key="4">
    <source>
        <dbReference type="PDB" id="1R8E"/>
    </source>
</evidence>
<protein>
    <recommendedName>
        <fullName>Multidrug-efflux transporter 1 regulator</fullName>
    </recommendedName>
</protein>
<comment type="function">
    <text>Activates transcription of the bmr gene in response to structurally dissimilar drugs. Binds rhodamine as an inducer.</text>
</comment>
<comment type="subunit">
    <text>Binds DNA as a homodimer.</text>
</comment>
<comment type="sequence caution" evidence="2">
    <conflict type="frameshift">
        <sequence resource="EMBL-CDS" id="BAA23495"/>
    </conflict>
</comment>
<name>BMRR_BACSU</name>
<sequence length="278" mass="32582">MKESYYSIGEVSKLANVSIKALRYYDKIDLFKPAYVDPDTSYRYYTDSQLIHLDLIKSLKYIGTPLEEMKKAQDLEMEELFAFYTEQERQIREKLDFLSALEQTISLVKKRMKRQMEYPALGEVFVLDEEEIRIIQTEAEGIGPENVLNASYSKLKKFIESADGFTNNSYGATFSFQPYTSIDEMTYRHIFTPVLTNKQISSITPDMEITTIPKGRYACIAYNFSPEHYFLNLQKLIKYIADRQLTVVSDVYELIIPIHYSPKKQEEYRVEMKIRIAE</sequence>
<accession>P39075</accession>
<dbReference type="EMBL" id="L25604">
    <property type="protein sequence ID" value="AAB81540.2"/>
    <property type="molecule type" value="Genomic_DNA"/>
</dbReference>
<dbReference type="EMBL" id="D84432">
    <property type="protein sequence ID" value="BAA23495.1"/>
    <property type="status" value="ALT_SEQ"/>
    <property type="molecule type" value="Genomic_DNA"/>
</dbReference>
<dbReference type="EMBL" id="AL009126">
    <property type="protein sequence ID" value="CAB14333.2"/>
    <property type="molecule type" value="Genomic_DNA"/>
</dbReference>
<dbReference type="PIR" id="E69595">
    <property type="entry name" value="E69595"/>
</dbReference>
<dbReference type="RefSeq" id="NP_390282.2">
    <property type="nucleotide sequence ID" value="NC_000964.3"/>
</dbReference>
<dbReference type="RefSeq" id="WP_003230325.1">
    <property type="nucleotide sequence ID" value="NZ_OZ025638.1"/>
</dbReference>
<dbReference type="PDB" id="1BOW">
    <property type="method" value="X-ray"/>
    <property type="resolution" value="2.70 A"/>
    <property type="chains" value="A=121-278"/>
</dbReference>
<dbReference type="PDB" id="1EXI">
    <property type="method" value="X-ray"/>
    <property type="resolution" value="3.12 A"/>
    <property type="chains" value="A=1-278"/>
</dbReference>
<dbReference type="PDB" id="1EXJ">
    <property type="method" value="X-ray"/>
    <property type="resolution" value="3.00 A"/>
    <property type="chains" value="A=1-278"/>
</dbReference>
<dbReference type="PDB" id="1R8E">
    <property type="method" value="X-ray"/>
    <property type="resolution" value="2.40 A"/>
    <property type="chains" value="A=1-278"/>
</dbReference>
<dbReference type="PDB" id="2BOW">
    <property type="method" value="X-ray"/>
    <property type="resolution" value="2.80 A"/>
    <property type="chains" value="A=121-278"/>
</dbReference>
<dbReference type="PDB" id="3D6Y">
    <property type="method" value="X-ray"/>
    <property type="resolution" value="2.70 A"/>
    <property type="chains" value="A=1-278"/>
</dbReference>
<dbReference type="PDB" id="3D6Z">
    <property type="method" value="X-ray"/>
    <property type="resolution" value="2.60 A"/>
    <property type="chains" value="A=1-278"/>
</dbReference>
<dbReference type="PDB" id="3D70">
    <property type="method" value="X-ray"/>
    <property type="resolution" value="2.80 A"/>
    <property type="chains" value="A=2-278"/>
</dbReference>
<dbReference type="PDB" id="3D71">
    <property type="method" value="X-ray"/>
    <property type="resolution" value="2.80 A"/>
    <property type="chains" value="A=1-276"/>
</dbReference>
<dbReference type="PDB" id="3IAO">
    <property type="method" value="X-ray"/>
    <property type="resolution" value="2.80 A"/>
    <property type="chains" value="A=1-278"/>
</dbReference>
<dbReference type="PDB" id="3Q1M">
    <property type="method" value="X-ray"/>
    <property type="resolution" value="3.20 A"/>
    <property type="chains" value="A=1-276"/>
</dbReference>
<dbReference type="PDB" id="3Q2Y">
    <property type="method" value="X-ray"/>
    <property type="resolution" value="2.95 A"/>
    <property type="chains" value="A=1-276"/>
</dbReference>
<dbReference type="PDB" id="3Q3D">
    <property type="method" value="X-ray"/>
    <property type="resolution" value="2.79 A"/>
    <property type="chains" value="A=1-276"/>
</dbReference>
<dbReference type="PDB" id="3Q5P">
    <property type="method" value="X-ray"/>
    <property type="resolution" value="2.94 A"/>
    <property type="chains" value="A=1-276"/>
</dbReference>
<dbReference type="PDB" id="3Q5R">
    <property type="method" value="X-ray"/>
    <property type="resolution" value="3.05 A"/>
    <property type="chains" value="A=1-276"/>
</dbReference>
<dbReference type="PDB" id="3Q5S">
    <property type="method" value="X-ray"/>
    <property type="resolution" value="3.10 A"/>
    <property type="chains" value="A=1-276"/>
</dbReference>
<dbReference type="PDB" id="7CKQ">
    <property type="method" value="EM"/>
    <property type="resolution" value="4.40 A"/>
    <property type="chains" value="G/I=1-278"/>
</dbReference>
<dbReference type="PDBsum" id="1BOW"/>
<dbReference type="PDBsum" id="1EXI"/>
<dbReference type="PDBsum" id="1EXJ"/>
<dbReference type="PDBsum" id="1R8E"/>
<dbReference type="PDBsum" id="2BOW"/>
<dbReference type="PDBsum" id="3D6Y"/>
<dbReference type="PDBsum" id="3D6Z"/>
<dbReference type="PDBsum" id="3D70"/>
<dbReference type="PDBsum" id="3D71"/>
<dbReference type="PDBsum" id="3IAO"/>
<dbReference type="PDBsum" id="3Q1M"/>
<dbReference type="PDBsum" id="3Q2Y"/>
<dbReference type="PDBsum" id="3Q3D"/>
<dbReference type="PDBsum" id="3Q5P"/>
<dbReference type="PDBsum" id="3Q5R"/>
<dbReference type="PDBsum" id="3Q5S"/>
<dbReference type="PDBsum" id="7CKQ"/>
<dbReference type="EMDB" id="EMD-30390"/>
<dbReference type="SMR" id="P39075"/>
<dbReference type="DIP" id="DIP-59692N"/>
<dbReference type="FunCoup" id="P39075">
    <property type="interactions" value="4"/>
</dbReference>
<dbReference type="STRING" id="224308.BSU24020"/>
<dbReference type="PaxDb" id="224308-BSU24020"/>
<dbReference type="EnsemblBacteria" id="CAB14333">
    <property type="protein sequence ID" value="CAB14333"/>
    <property type="gene ID" value="BSU_24020"/>
</dbReference>
<dbReference type="GeneID" id="938676"/>
<dbReference type="KEGG" id="bsu:BSU24020"/>
<dbReference type="PATRIC" id="fig|224308.179.peg.2616"/>
<dbReference type="eggNOG" id="COG0789">
    <property type="taxonomic scope" value="Bacteria"/>
</dbReference>
<dbReference type="eggNOG" id="COG4978">
    <property type="taxonomic scope" value="Bacteria"/>
</dbReference>
<dbReference type="InParanoid" id="P39075"/>
<dbReference type="OrthoDB" id="9773308at2"/>
<dbReference type="PhylomeDB" id="P39075"/>
<dbReference type="BioCyc" id="BSUB:BSU24020-MONOMER"/>
<dbReference type="EvolutionaryTrace" id="P39075"/>
<dbReference type="Proteomes" id="UP000001570">
    <property type="component" value="Chromosome"/>
</dbReference>
<dbReference type="GO" id="GO:0003677">
    <property type="term" value="F:DNA binding"/>
    <property type="evidence" value="ECO:0007669"/>
    <property type="project" value="UniProtKB-KW"/>
</dbReference>
<dbReference type="GO" id="GO:0003700">
    <property type="term" value="F:DNA-binding transcription factor activity"/>
    <property type="evidence" value="ECO:0000318"/>
    <property type="project" value="GO_Central"/>
</dbReference>
<dbReference type="GO" id="GO:0006355">
    <property type="term" value="P:regulation of DNA-templated transcription"/>
    <property type="evidence" value="ECO:0000318"/>
    <property type="project" value="GO_Central"/>
</dbReference>
<dbReference type="CDD" id="cd01107">
    <property type="entry name" value="HTH_BmrR"/>
    <property type="match status" value="1"/>
</dbReference>
<dbReference type="Gene3D" id="1.10.1660.10">
    <property type="match status" value="1"/>
</dbReference>
<dbReference type="Gene3D" id="3.20.80.10">
    <property type="entry name" value="Regulatory factor, effector binding domain"/>
    <property type="match status" value="1"/>
</dbReference>
<dbReference type="Gene3D" id="1.20.5.490">
    <property type="entry name" value="Single helix bin"/>
    <property type="match status" value="1"/>
</dbReference>
<dbReference type="InterPro" id="IPR009061">
    <property type="entry name" value="DNA-bd_dom_put_sf"/>
</dbReference>
<dbReference type="InterPro" id="IPR029442">
    <property type="entry name" value="GyrI-like"/>
</dbReference>
<dbReference type="InterPro" id="IPR000551">
    <property type="entry name" value="MerR-type_HTH_dom"/>
</dbReference>
<dbReference type="InterPro" id="IPR047057">
    <property type="entry name" value="MerR_fam"/>
</dbReference>
<dbReference type="InterPro" id="IPR011256">
    <property type="entry name" value="Reg_factor_effector_dom_sf"/>
</dbReference>
<dbReference type="PANTHER" id="PTHR30204:SF96">
    <property type="entry name" value="CHROMOSOME-ANCHORING PROTEIN RACA"/>
    <property type="match status" value="1"/>
</dbReference>
<dbReference type="PANTHER" id="PTHR30204">
    <property type="entry name" value="REDOX-CYCLING DRUG-SENSING TRANSCRIPTIONAL ACTIVATOR SOXR"/>
    <property type="match status" value="1"/>
</dbReference>
<dbReference type="Pfam" id="PF06445">
    <property type="entry name" value="GyrI-like"/>
    <property type="match status" value="1"/>
</dbReference>
<dbReference type="Pfam" id="PF13411">
    <property type="entry name" value="MerR_1"/>
    <property type="match status" value="1"/>
</dbReference>
<dbReference type="SMART" id="SM00422">
    <property type="entry name" value="HTH_MERR"/>
    <property type="match status" value="1"/>
</dbReference>
<dbReference type="SUPFAM" id="SSF55136">
    <property type="entry name" value="Probable bacterial effector-binding domain"/>
    <property type="match status" value="1"/>
</dbReference>
<dbReference type="SUPFAM" id="SSF46955">
    <property type="entry name" value="Putative DNA-binding domain"/>
    <property type="match status" value="1"/>
</dbReference>
<dbReference type="PROSITE" id="PS00552">
    <property type="entry name" value="HTH_MERR_1"/>
    <property type="match status" value="1"/>
</dbReference>
<dbReference type="PROSITE" id="PS50937">
    <property type="entry name" value="HTH_MERR_2"/>
    <property type="match status" value="1"/>
</dbReference>
<reference key="1">
    <citation type="journal article" date="1994" name="J. Biol. Chem.">
        <title>A protein that activates expression of a multidrug efflux transporter upon binding the transporter substrates.</title>
        <authorList>
            <person name="Ahmed M."/>
            <person name="Borsch C.M."/>
            <person name="Taylor S.S."/>
            <person name="Vazquez-Laslop N."/>
            <person name="Neyfakh A.A."/>
        </authorList>
    </citation>
    <scope>NUCLEOTIDE SEQUENCE [GENOMIC DNA]</scope>
    <source>
        <strain>168 / Marburg / ATCC 6051 / DSM 10 / JCM 1465 / NBRC 13719 / NCIMB 3610 / NRRL NRS-744 / VKM B-501</strain>
    </source>
</reference>
<reference key="2">
    <citation type="submission" date="1999-08" db="EMBL/GenBank/DDBJ databases">
        <authorList>
            <person name="Neyfakh A.A."/>
        </authorList>
    </citation>
    <scope>SEQUENCE REVISION</scope>
</reference>
<reference key="3">
    <citation type="journal article" date="1996" name="Microbiology">
        <title>Systematic sequencing of the 283 kb 210 degrees-232 degrees region of the Bacillus subtilis genome containing the skin element and many sporulation genes.</title>
        <authorList>
            <person name="Mizuno M."/>
            <person name="Masuda S."/>
            <person name="Takemaru K."/>
            <person name="Hosono S."/>
            <person name="Sato T."/>
            <person name="Takeuchi M."/>
            <person name="Kobayashi Y."/>
        </authorList>
    </citation>
    <scope>NUCLEOTIDE SEQUENCE [GENOMIC DNA]</scope>
    <source>
        <strain>168 / JH642</strain>
    </source>
</reference>
<reference key="4">
    <citation type="journal article" date="1997" name="Nature">
        <title>The complete genome sequence of the Gram-positive bacterium Bacillus subtilis.</title>
        <authorList>
            <person name="Kunst F."/>
            <person name="Ogasawara N."/>
            <person name="Moszer I."/>
            <person name="Albertini A.M."/>
            <person name="Alloni G."/>
            <person name="Azevedo V."/>
            <person name="Bertero M.G."/>
            <person name="Bessieres P."/>
            <person name="Bolotin A."/>
            <person name="Borchert S."/>
            <person name="Borriss R."/>
            <person name="Boursier L."/>
            <person name="Brans A."/>
            <person name="Braun M."/>
            <person name="Brignell S.C."/>
            <person name="Bron S."/>
            <person name="Brouillet S."/>
            <person name="Bruschi C.V."/>
            <person name="Caldwell B."/>
            <person name="Capuano V."/>
            <person name="Carter N.M."/>
            <person name="Choi S.-K."/>
            <person name="Codani J.-J."/>
            <person name="Connerton I.F."/>
            <person name="Cummings N.J."/>
            <person name="Daniel R.A."/>
            <person name="Denizot F."/>
            <person name="Devine K.M."/>
            <person name="Duesterhoeft A."/>
            <person name="Ehrlich S.D."/>
            <person name="Emmerson P.T."/>
            <person name="Entian K.-D."/>
            <person name="Errington J."/>
            <person name="Fabret C."/>
            <person name="Ferrari E."/>
            <person name="Foulger D."/>
            <person name="Fritz C."/>
            <person name="Fujita M."/>
            <person name="Fujita Y."/>
            <person name="Fuma S."/>
            <person name="Galizzi A."/>
            <person name="Galleron N."/>
            <person name="Ghim S.-Y."/>
            <person name="Glaser P."/>
            <person name="Goffeau A."/>
            <person name="Golightly E.J."/>
            <person name="Grandi G."/>
            <person name="Guiseppi G."/>
            <person name="Guy B.J."/>
            <person name="Haga K."/>
            <person name="Haiech J."/>
            <person name="Harwood C.R."/>
            <person name="Henaut A."/>
            <person name="Hilbert H."/>
            <person name="Holsappel S."/>
            <person name="Hosono S."/>
            <person name="Hullo M.-F."/>
            <person name="Itaya M."/>
            <person name="Jones L.-M."/>
            <person name="Joris B."/>
            <person name="Karamata D."/>
            <person name="Kasahara Y."/>
            <person name="Klaerr-Blanchard M."/>
            <person name="Klein C."/>
            <person name="Kobayashi Y."/>
            <person name="Koetter P."/>
            <person name="Koningstein G."/>
            <person name="Krogh S."/>
            <person name="Kumano M."/>
            <person name="Kurita K."/>
            <person name="Lapidus A."/>
            <person name="Lardinois S."/>
            <person name="Lauber J."/>
            <person name="Lazarevic V."/>
            <person name="Lee S.-M."/>
            <person name="Levine A."/>
            <person name="Liu H."/>
            <person name="Masuda S."/>
            <person name="Mauel C."/>
            <person name="Medigue C."/>
            <person name="Medina N."/>
            <person name="Mellado R.P."/>
            <person name="Mizuno M."/>
            <person name="Moestl D."/>
            <person name="Nakai S."/>
            <person name="Noback M."/>
            <person name="Noone D."/>
            <person name="O'Reilly M."/>
            <person name="Ogawa K."/>
            <person name="Ogiwara A."/>
            <person name="Oudega B."/>
            <person name="Park S.-H."/>
            <person name="Parro V."/>
            <person name="Pohl T.M."/>
            <person name="Portetelle D."/>
            <person name="Porwollik S."/>
            <person name="Prescott A.M."/>
            <person name="Presecan E."/>
            <person name="Pujic P."/>
            <person name="Purnelle B."/>
            <person name="Rapoport G."/>
            <person name="Rey M."/>
            <person name="Reynolds S."/>
            <person name="Rieger M."/>
            <person name="Rivolta C."/>
            <person name="Rocha E."/>
            <person name="Roche B."/>
            <person name="Rose M."/>
            <person name="Sadaie Y."/>
            <person name="Sato T."/>
            <person name="Scanlan E."/>
            <person name="Schleich S."/>
            <person name="Schroeter R."/>
            <person name="Scoffone F."/>
            <person name="Sekiguchi J."/>
            <person name="Sekowska A."/>
            <person name="Seror S.J."/>
            <person name="Serror P."/>
            <person name="Shin B.-S."/>
            <person name="Soldo B."/>
            <person name="Sorokin A."/>
            <person name="Tacconi E."/>
            <person name="Takagi T."/>
            <person name="Takahashi H."/>
            <person name="Takemaru K."/>
            <person name="Takeuchi M."/>
            <person name="Tamakoshi A."/>
            <person name="Tanaka T."/>
            <person name="Terpstra P."/>
            <person name="Tognoni A."/>
            <person name="Tosato V."/>
            <person name="Uchiyama S."/>
            <person name="Vandenbol M."/>
            <person name="Vannier F."/>
            <person name="Vassarotti A."/>
            <person name="Viari A."/>
            <person name="Wambutt R."/>
            <person name="Wedler E."/>
            <person name="Wedler H."/>
            <person name="Weitzenegger T."/>
            <person name="Winters P."/>
            <person name="Wipat A."/>
            <person name="Yamamoto H."/>
            <person name="Yamane K."/>
            <person name="Yasumoto K."/>
            <person name="Yata K."/>
            <person name="Yoshida K."/>
            <person name="Yoshikawa H.-F."/>
            <person name="Zumstein E."/>
            <person name="Yoshikawa H."/>
            <person name="Danchin A."/>
        </authorList>
    </citation>
    <scope>NUCLEOTIDE SEQUENCE [LARGE SCALE GENOMIC DNA]</scope>
    <source>
        <strain>168</strain>
    </source>
</reference>
<reference key="5">
    <citation type="journal article" date="1999" name="Genome Res.">
        <title>Detecting and analyzing DNA sequencing errors: toward a higher quality of the Bacillus subtilis genome sequence.</title>
        <authorList>
            <person name="Medigue C."/>
            <person name="Rose M."/>
            <person name="Viari A."/>
            <person name="Danchin A."/>
        </authorList>
    </citation>
    <scope>SEQUENCE REVISION</scope>
</reference>
<reference key="6">
    <citation type="journal article" date="1999" name="Cell">
        <title>Structural basis of multidrug recognition by BmrR, a transcription activator of a multidrug transporter.</title>
        <authorList>
            <person name="Zheleznova E.E."/>
            <person name="Markham P.N."/>
            <person name="Neyfakh A.A."/>
            <person name="Brennan R.G."/>
        </authorList>
    </citation>
    <scope>X-RAY CRYSTALLOGRAPHY (2.7 ANGSTROMS) OF 120-228</scope>
</reference>
<reference key="7">
    <citation type="journal article" date="2001" name="Nature">
        <title>Crystal structure of the transcription activator BmrR bound to DNA and a drug.</title>
        <authorList>
            <person name="Heldwein E.E."/>
            <person name="Brennan R.G."/>
        </authorList>
    </citation>
    <scope>X-RAY CRYSTALLOGRAPHY (3.12 ANGSTROMS)</scope>
</reference>